<accession>Q8DCV7</accession>
<protein>
    <recommendedName>
        <fullName evidence="1">Small ribosomal subunit biogenesis GTPase RsgA 1</fullName>
        <ecNumber evidence="1">3.6.1.-</ecNumber>
    </recommendedName>
</protein>
<name>RSGA1_VIBVU</name>
<gene>
    <name evidence="1" type="primary">rsgA1</name>
    <name type="ordered locus">VV1_1285</name>
</gene>
<organism>
    <name type="scientific">Vibrio vulnificus (strain CMCP6)</name>
    <dbReference type="NCBI Taxonomy" id="216895"/>
    <lineage>
        <taxon>Bacteria</taxon>
        <taxon>Pseudomonadati</taxon>
        <taxon>Pseudomonadota</taxon>
        <taxon>Gammaproteobacteria</taxon>
        <taxon>Vibrionales</taxon>
        <taxon>Vibrionaceae</taxon>
        <taxon>Vibrio</taxon>
    </lineage>
</organism>
<feature type="chain" id="PRO_0000171542" description="Small ribosomal subunit biogenesis GTPase RsgA 1">
    <location>
        <begin position="1"/>
        <end position="352"/>
    </location>
</feature>
<feature type="domain" description="CP-type G" evidence="2">
    <location>
        <begin position="104"/>
        <end position="272"/>
    </location>
</feature>
<feature type="region of interest" description="Disordered" evidence="3">
    <location>
        <begin position="1"/>
        <end position="24"/>
    </location>
</feature>
<feature type="binding site" evidence="1">
    <location>
        <begin position="160"/>
        <end position="163"/>
    </location>
    <ligand>
        <name>GTP</name>
        <dbReference type="ChEBI" id="CHEBI:37565"/>
    </ligand>
</feature>
<feature type="binding site" evidence="1">
    <location>
        <begin position="214"/>
        <end position="222"/>
    </location>
    <ligand>
        <name>GTP</name>
        <dbReference type="ChEBI" id="CHEBI:37565"/>
    </ligand>
</feature>
<feature type="binding site" evidence="1">
    <location>
        <position position="296"/>
    </location>
    <ligand>
        <name>Zn(2+)</name>
        <dbReference type="ChEBI" id="CHEBI:29105"/>
    </ligand>
</feature>
<feature type="binding site" evidence="1">
    <location>
        <position position="301"/>
    </location>
    <ligand>
        <name>Zn(2+)</name>
        <dbReference type="ChEBI" id="CHEBI:29105"/>
    </ligand>
</feature>
<feature type="binding site" evidence="1">
    <location>
        <position position="303"/>
    </location>
    <ligand>
        <name>Zn(2+)</name>
        <dbReference type="ChEBI" id="CHEBI:29105"/>
    </ligand>
</feature>
<feature type="binding site" evidence="1">
    <location>
        <position position="309"/>
    </location>
    <ligand>
        <name>Zn(2+)</name>
        <dbReference type="ChEBI" id="CHEBI:29105"/>
    </ligand>
</feature>
<reference key="1">
    <citation type="submission" date="2002-12" db="EMBL/GenBank/DDBJ databases">
        <title>Complete genome sequence of Vibrio vulnificus CMCP6.</title>
        <authorList>
            <person name="Rhee J.H."/>
            <person name="Kim S.Y."/>
            <person name="Chung S.S."/>
            <person name="Kim J.J."/>
            <person name="Moon Y.H."/>
            <person name="Jeong H."/>
            <person name="Choy H.E."/>
        </authorList>
    </citation>
    <scope>NUCLEOTIDE SEQUENCE [LARGE SCALE GENOMIC DNA]</scope>
    <source>
        <strain>CMCP6</strain>
    </source>
</reference>
<dbReference type="EC" id="3.6.1.-" evidence="1"/>
<dbReference type="EMBL" id="AE016795">
    <property type="protein sequence ID" value="AAO09740.1"/>
    <property type="molecule type" value="Genomic_DNA"/>
</dbReference>
<dbReference type="SMR" id="Q8DCV7"/>
<dbReference type="KEGG" id="vvu:VV1_1285"/>
<dbReference type="HOGENOM" id="CLU_033617_2_0_6"/>
<dbReference type="Proteomes" id="UP000002275">
    <property type="component" value="Chromosome 1"/>
</dbReference>
<dbReference type="GO" id="GO:0005737">
    <property type="term" value="C:cytoplasm"/>
    <property type="evidence" value="ECO:0007669"/>
    <property type="project" value="UniProtKB-SubCell"/>
</dbReference>
<dbReference type="GO" id="GO:0005525">
    <property type="term" value="F:GTP binding"/>
    <property type="evidence" value="ECO:0007669"/>
    <property type="project" value="UniProtKB-UniRule"/>
</dbReference>
<dbReference type="GO" id="GO:0003924">
    <property type="term" value="F:GTPase activity"/>
    <property type="evidence" value="ECO:0007669"/>
    <property type="project" value="UniProtKB-UniRule"/>
</dbReference>
<dbReference type="GO" id="GO:0046872">
    <property type="term" value="F:metal ion binding"/>
    <property type="evidence" value="ECO:0007669"/>
    <property type="project" value="UniProtKB-KW"/>
</dbReference>
<dbReference type="GO" id="GO:0019843">
    <property type="term" value="F:rRNA binding"/>
    <property type="evidence" value="ECO:0007669"/>
    <property type="project" value="UniProtKB-KW"/>
</dbReference>
<dbReference type="GO" id="GO:0042274">
    <property type="term" value="P:ribosomal small subunit biogenesis"/>
    <property type="evidence" value="ECO:0007669"/>
    <property type="project" value="UniProtKB-UniRule"/>
</dbReference>
<dbReference type="CDD" id="cd01854">
    <property type="entry name" value="YjeQ_EngC"/>
    <property type="match status" value="1"/>
</dbReference>
<dbReference type="Gene3D" id="2.40.50.140">
    <property type="entry name" value="Nucleic acid-binding proteins"/>
    <property type="match status" value="1"/>
</dbReference>
<dbReference type="Gene3D" id="3.40.50.300">
    <property type="entry name" value="P-loop containing nucleotide triphosphate hydrolases"/>
    <property type="match status" value="1"/>
</dbReference>
<dbReference type="Gene3D" id="1.10.40.50">
    <property type="entry name" value="Probable gtpase engc, domain 3"/>
    <property type="match status" value="1"/>
</dbReference>
<dbReference type="HAMAP" id="MF_01820">
    <property type="entry name" value="GTPase_RsgA"/>
    <property type="match status" value="1"/>
</dbReference>
<dbReference type="InterPro" id="IPR030378">
    <property type="entry name" value="G_CP_dom"/>
</dbReference>
<dbReference type="InterPro" id="IPR012340">
    <property type="entry name" value="NA-bd_OB-fold"/>
</dbReference>
<dbReference type="InterPro" id="IPR027417">
    <property type="entry name" value="P-loop_NTPase"/>
</dbReference>
<dbReference type="InterPro" id="IPR004881">
    <property type="entry name" value="Ribosome_biogen_GTPase_RsgA"/>
</dbReference>
<dbReference type="InterPro" id="IPR010914">
    <property type="entry name" value="RsgA_GTPase_dom"/>
</dbReference>
<dbReference type="NCBIfam" id="NF008931">
    <property type="entry name" value="PRK12288.1"/>
    <property type="match status" value="1"/>
</dbReference>
<dbReference type="NCBIfam" id="TIGR00157">
    <property type="entry name" value="ribosome small subunit-dependent GTPase A"/>
    <property type="match status" value="1"/>
</dbReference>
<dbReference type="PANTHER" id="PTHR32120">
    <property type="entry name" value="SMALL RIBOSOMAL SUBUNIT BIOGENESIS GTPASE RSGA"/>
    <property type="match status" value="1"/>
</dbReference>
<dbReference type="PANTHER" id="PTHR32120:SF11">
    <property type="entry name" value="SMALL RIBOSOMAL SUBUNIT BIOGENESIS GTPASE RSGA 1, MITOCHONDRIAL-RELATED"/>
    <property type="match status" value="1"/>
</dbReference>
<dbReference type="Pfam" id="PF03193">
    <property type="entry name" value="RsgA_GTPase"/>
    <property type="match status" value="1"/>
</dbReference>
<dbReference type="SUPFAM" id="SSF52540">
    <property type="entry name" value="P-loop containing nucleoside triphosphate hydrolases"/>
    <property type="match status" value="1"/>
</dbReference>
<dbReference type="PROSITE" id="PS50936">
    <property type="entry name" value="ENGC_GTPASE"/>
    <property type="match status" value="1"/>
</dbReference>
<dbReference type="PROSITE" id="PS51721">
    <property type="entry name" value="G_CP"/>
    <property type="match status" value="1"/>
</dbReference>
<keyword id="KW-0963">Cytoplasm</keyword>
<keyword id="KW-0342">GTP-binding</keyword>
<keyword id="KW-0378">Hydrolase</keyword>
<keyword id="KW-0479">Metal-binding</keyword>
<keyword id="KW-0547">Nucleotide-binding</keyword>
<keyword id="KW-0690">Ribosome biogenesis</keyword>
<keyword id="KW-0694">RNA-binding</keyword>
<keyword id="KW-0699">rRNA-binding</keyword>
<keyword id="KW-0862">Zinc</keyword>
<evidence type="ECO:0000255" key="1">
    <source>
        <dbReference type="HAMAP-Rule" id="MF_01820"/>
    </source>
</evidence>
<evidence type="ECO:0000255" key="2">
    <source>
        <dbReference type="PROSITE-ProRule" id="PRU01058"/>
    </source>
</evidence>
<evidence type="ECO:0000256" key="3">
    <source>
        <dbReference type="SAM" id="MobiDB-lite"/>
    </source>
</evidence>
<sequence length="352" mass="39495">MAKKKKLTQGQVRRVRDNQQKRLKKQADTIQWDEAMLGDSRRGLVITRFGQHADIEDAETGLIERCNLRRGIESLVSGDKVIWRKGLESMAGISGVVEAVEPRTSVLTRPDYYDGLKPVAANIDQMVIVSSVLPELSLNIIDRYLIAAETLGIEPLLVLNKIDLLQEAELATYREWLADYEKIGYKILYVSKRSGAGIAELEAQLQDRINIFVGQSGVGKSSLVNALIPELDIEEGEISELSGLGQHTTTAARLYHIPSGGNLIDSPGVREFGLWHLEPEEITKAYLEFRPYLGGCKFRDCKHADDPGCIIREAVENGEISEVRYDNYHRIIESMAENKANRQYSRNKKADL</sequence>
<proteinExistence type="inferred from homology"/>
<comment type="function">
    <text evidence="1">One of several proteins that assist in the late maturation steps of the functional core of the 30S ribosomal subunit. Helps release RbfA from mature subunits. May play a role in the assembly of ribosomal proteins into the subunit. Circularly permuted GTPase that catalyzes slow GTP hydrolysis, GTPase activity is stimulated by the 30S ribosomal subunit.</text>
</comment>
<comment type="cofactor">
    <cofactor evidence="1">
        <name>Zn(2+)</name>
        <dbReference type="ChEBI" id="CHEBI:29105"/>
    </cofactor>
    <text evidence="1">Binds 1 zinc ion per subunit.</text>
</comment>
<comment type="subunit">
    <text evidence="1">Monomer. Associates with 30S ribosomal subunit, binds 16S rRNA.</text>
</comment>
<comment type="subcellular location">
    <subcellularLocation>
        <location evidence="1">Cytoplasm</location>
    </subcellularLocation>
</comment>
<comment type="similarity">
    <text evidence="1">Belongs to the TRAFAC class YlqF/YawG GTPase family. RsgA subfamily.</text>
</comment>